<proteinExistence type="evidence at transcript level"/>
<keyword id="KW-0027">Amidation</keyword>
<keyword id="KW-1015">Disulfide bond</keyword>
<keyword id="KW-0964">Secreted</keyword>
<keyword id="KW-0732">Signal</keyword>
<keyword id="KW-0800">Toxin</keyword>
<comment type="subcellular location">
    <subcellularLocation>
        <location evidence="1">Secreted</location>
    </subcellularLocation>
</comment>
<comment type="tissue specificity">
    <text>Expressed by the venom duct.</text>
</comment>
<comment type="domain">
    <text>The cysteine framework is III (CC-C-C-CC). Classified in the M-3 branch, since 3 residues stand between the fourth and the fifth cysteine residues.</text>
</comment>
<comment type="similarity">
    <text evidence="3">Belongs to the conotoxin M superfamily.</text>
</comment>
<organism>
    <name type="scientific">Conus marmoreus</name>
    <name type="common">Marble cone</name>
    <dbReference type="NCBI Taxonomy" id="42752"/>
    <lineage>
        <taxon>Eukaryota</taxon>
        <taxon>Metazoa</taxon>
        <taxon>Spiralia</taxon>
        <taxon>Lophotrochozoa</taxon>
        <taxon>Mollusca</taxon>
        <taxon>Gastropoda</taxon>
        <taxon>Caenogastropoda</taxon>
        <taxon>Neogastropoda</taxon>
        <taxon>Conoidea</taxon>
        <taxon>Conidae</taxon>
        <taxon>Conus</taxon>
    </lineage>
</organism>
<protein>
    <recommendedName>
        <fullName>Conotoxin Mr3.5</fullName>
    </recommendedName>
</protein>
<reference key="1">
    <citation type="journal article" date="2005" name="Biochemistry">
        <title>Definition of the M-conotoxin superfamily: characterization of novel peptides from molluscivorous Conus venoms.</title>
        <authorList>
            <person name="Corpuz G.P."/>
            <person name="Jacobsen R.B."/>
            <person name="Jimenez E.C."/>
            <person name="Watkins M."/>
            <person name="Walker C."/>
            <person name="Colledge C."/>
            <person name="Garrett J.E."/>
            <person name="McDougal O."/>
            <person name="Li W."/>
            <person name="Gray W.R."/>
            <person name="Hillyard D.R."/>
            <person name="Rivier J."/>
            <person name="McIntosh J.M."/>
            <person name="Cruz L.J."/>
            <person name="Olivera B.M."/>
        </authorList>
    </citation>
    <scope>NUCLEOTIDE SEQUENCE [MRNA]</scope>
    <source>
        <tissue>Venom duct</tissue>
    </source>
</reference>
<name>CM35_CONMR</name>
<evidence type="ECO:0000250" key="1"/>
<evidence type="ECO:0000255" key="2"/>
<evidence type="ECO:0000305" key="3"/>
<feature type="signal peptide" evidence="2">
    <location>
        <begin position="1"/>
        <end position="19"/>
    </location>
</feature>
<feature type="propeptide" id="PRO_0000246045" evidence="1">
    <location>
        <begin position="20"/>
        <end position="46"/>
    </location>
</feature>
<feature type="peptide" id="PRO_0000246046" description="Conotoxin Mr3.5">
    <location>
        <begin position="47"/>
        <end position="63"/>
    </location>
</feature>
<feature type="modified residue" description="Cysteine amide" evidence="1">
    <location>
        <position position="63"/>
    </location>
</feature>
<feature type="disulfide bond" evidence="1">
    <location>
        <begin position="49"/>
        <end position="58"/>
    </location>
</feature>
<feature type="disulfide bond" evidence="1">
    <location>
        <begin position="50"/>
        <end position="62"/>
    </location>
</feature>
<feature type="disulfide bond" evidence="1">
    <location>
        <begin position="54"/>
        <end position="63"/>
    </location>
</feature>
<accession>P0C1N4</accession>
<dbReference type="ConoServer" id="1468">
    <property type="toxin name" value="Mr3.5 precursor"/>
</dbReference>
<dbReference type="GO" id="GO:0005576">
    <property type="term" value="C:extracellular region"/>
    <property type="evidence" value="ECO:0007669"/>
    <property type="project" value="UniProtKB-SubCell"/>
</dbReference>
<dbReference type="GO" id="GO:0008200">
    <property type="term" value="F:ion channel inhibitor activity"/>
    <property type="evidence" value="ECO:0007669"/>
    <property type="project" value="InterPro"/>
</dbReference>
<dbReference type="GO" id="GO:0090729">
    <property type="term" value="F:toxin activity"/>
    <property type="evidence" value="ECO:0007669"/>
    <property type="project" value="UniProtKB-KW"/>
</dbReference>
<dbReference type="InterPro" id="IPR004214">
    <property type="entry name" value="Conotoxin"/>
</dbReference>
<dbReference type="Pfam" id="PF02950">
    <property type="entry name" value="Conotoxin"/>
    <property type="match status" value="1"/>
</dbReference>
<sequence>MSKLGVLLTICLLLFPLTALPLDGDQPADQRAERTQAEKHSLPDPRMGCCPFPCKTSCTTLCCG</sequence>